<reference key="1">
    <citation type="journal article" date="1997" name="Microbiology">
        <title>The nucleoside-specific Tsx channel from the outer membrane of Salmonella typhimurium, Klebsiella pneumoniae and Enterobacter aerogenes: functional characterization and DNA sequence analysis of the tsx genes.</title>
        <authorList>
            <person name="Nieweg A."/>
            <person name="Bremer E."/>
        </authorList>
    </citation>
    <scope>NUCLEOTIDE SEQUENCE [GENOMIC DNA]</scope>
    <scope>FUNCTION</scope>
    <scope>SUBCELLULAR LOCATION</scope>
    <source>
        <strain>LT2</strain>
    </source>
</reference>
<reference key="2">
    <citation type="journal article" date="2001" name="Nature">
        <title>Complete genome sequence of Salmonella enterica serovar Typhimurium LT2.</title>
        <authorList>
            <person name="McClelland M."/>
            <person name="Sanderson K.E."/>
            <person name="Spieth J."/>
            <person name="Clifton S.W."/>
            <person name="Latreille P."/>
            <person name="Courtney L."/>
            <person name="Porwollik S."/>
            <person name="Ali J."/>
            <person name="Dante M."/>
            <person name="Du F."/>
            <person name="Hou S."/>
            <person name="Layman D."/>
            <person name="Leonard S."/>
            <person name="Nguyen C."/>
            <person name="Scott K."/>
            <person name="Holmes A."/>
            <person name="Grewal N."/>
            <person name="Mulvaney E."/>
            <person name="Ryan E."/>
            <person name="Sun H."/>
            <person name="Florea L."/>
            <person name="Miller W."/>
            <person name="Stoneking T."/>
            <person name="Nhan M."/>
            <person name="Waterston R."/>
            <person name="Wilson R.K."/>
        </authorList>
    </citation>
    <scope>NUCLEOTIDE SEQUENCE [LARGE SCALE GENOMIC DNA]</scope>
    <source>
        <strain>LT2 / SGSC1412 / ATCC 700720</strain>
    </source>
</reference>
<name>TSX_SALTY</name>
<comment type="function">
    <text evidence="2">Functions as a substrate-specific channel for nucleosides and deoxynucleosides. Also functions in albicidin uptake and as receptor for colicin K.</text>
</comment>
<comment type="subcellular location">
    <subcellularLocation>
        <location evidence="2">Cell outer membrane</location>
        <topology evidence="5">Multi-pass membrane protein</topology>
    </subcellularLocation>
</comment>
<comment type="similarity">
    <text evidence="4">Belongs to the nucleoside-specific channel-forming outer membrane porin (Tsx) (TC 1.B.10) family.</text>
</comment>
<dbReference type="EMBL" id="Z26657">
    <property type="protein sequence ID" value="CAA81398.1"/>
    <property type="molecule type" value="Genomic_DNA"/>
</dbReference>
<dbReference type="EMBL" id="AE006468">
    <property type="protein sequence ID" value="AAL19367.1"/>
    <property type="molecule type" value="Genomic_DNA"/>
</dbReference>
<dbReference type="PIR" id="S49159">
    <property type="entry name" value="S49159"/>
</dbReference>
<dbReference type="RefSeq" id="NP_459408.1">
    <property type="nucleotide sequence ID" value="NC_003197.2"/>
</dbReference>
<dbReference type="RefSeq" id="WP_000752021.1">
    <property type="nucleotide sequence ID" value="NC_003197.2"/>
</dbReference>
<dbReference type="SMR" id="P0A261"/>
<dbReference type="STRING" id="99287.STM0413"/>
<dbReference type="PaxDb" id="99287-STM0413"/>
<dbReference type="GeneID" id="1251932"/>
<dbReference type="KEGG" id="stm:STM0413"/>
<dbReference type="PATRIC" id="fig|99287.12.peg.440"/>
<dbReference type="HOGENOM" id="CLU_073836_0_0_6"/>
<dbReference type="PhylomeDB" id="P0A261"/>
<dbReference type="BioCyc" id="SENT99287:STM0413-MONOMER"/>
<dbReference type="Proteomes" id="UP000001014">
    <property type="component" value="Chromosome"/>
</dbReference>
<dbReference type="GO" id="GO:0009279">
    <property type="term" value="C:cell outer membrane"/>
    <property type="evidence" value="ECO:0007669"/>
    <property type="project" value="UniProtKB-SubCell"/>
</dbReference>
<dbReference type="GO" id="GO:0046930">
    <property type="term" value="C:pore complex"/>
    <property type="evidence" value="ECO:0007669"/>
    <property type="project" value="UniProtKB-KW"/>
</dbReference>
<dbReference type="GO" id="GO:0005337">
    <property type="term" value="F:nucleoside transmembrane transporter activity"/>
    <property type="evidence" value="ECO:0007669"/>
    <property type="project" value="InterPro"/>
</dbReference>
<dbReference type="GO" id="GO:0015288">
    <property type="term" value="F:porin activity"/>
    <property type="evidence" value="ECO:0007669"/>
    <property type="project" value="UniProtKB-KW"/>
</dbReference>
<dbReference type="GO" id="GO:0006811">
    <property type="term" value="P:monoatomic ion transport"/>
    <property type="evidence" value="ECO:0007669"/>
    <property type="project" value="UniProtKB-KW"/>
</dbReference>
<dbReference type="Gene3D" id="2.40.230.20">
    <property type="entry name" value="Nucleoside-specific channel-forming protein, Tsx-like"/>
    <property type="match status" value="1"/>
</dbReference>
<dbReference type="InterPro" id="IPR003055">
    <property type="entry name" value="Channel_Tsx"/>
</dbReference>
<dbReference type="InterPro" id="IPR018013">
    <property type="entry name" value="Channel_Tsx-like"/>
</dbReference>
<dbReference type="InterPro" id="IPR036777">
    <property type="entry name" value="Channel_Tsx-like_sf"/>
</dbReference>
<dbReference type="NCBIfam" id="NF011686">
    <property type="entry name" value="PRK15106.1"/>
    <property type="match status" value="1"/>
</dbReference>
<dbReference type="Pfam" id="PF03502">
    <property type="entry name" value="Channel_Tsx"/>
    <property type="match status" value="1"/>
</dbReference>
<dbReference type="PRINTS" id="PR01277">
    <property type="entry name" value="CHANNELTSX"/>
</dbReference>
<dbReference type="SUPFAM" id="SSF111364">
    <property type="entry name" value="Tsx-like channel"/>
    <property type="match status" value="1"/>
</dbReference>
<evidence type="ECO:0000255" key="1"/>
<evidence type="ECO:0000269" key="2">
    <source>
    </source>
</evidence>
<evidence type="ECO:0000303" key="3">
    <source>
    </source>
</evidence>
<evidence type="ECO:0000305" key="4"/>
<evidence type="ECO:0000305" key="5">
    <source>
    </source>
</evidence>
<protein>
    <recommendedName>
        <fullName evidence="4">Nucleoside-specific channel-forming protein Tsx</fullName>
    </recommendedName>
</protein>
<keyword id="KW-0998">Cell outer membrane</keyword>
<keyword id="KW-0406">Ion transport</keyword>
<keyword id="KW-0472">Membrane</keyword>
<keyword id="KW-0626">Porin</keyword>
<keyword id="KW-1185">Reference proteome</keyword>
<keyword id="KW-0732">Signal</keyword>
<keyword id="KW-0812">Transmembrane</keyword>
<keyword id="KW-1134">Transmembrane beta strand</keyword>
<keyword id="KW-0813">Transport</keyword>
<accession>P0A261</accession>
<accession>P40776</accession>
<feature type="signal peptide" evidence="1">
    <location>
        <begin position="1"/>
        <end position="22"/>
    </location>
</feature>
<feature type="chain" id="PRO_0000025195" description="Nucleoside-specific channel-forming protein Tsx">
    <location>
        <begin position="23"/>
        <end position="287"/>
    </location>
</feature>
<gene>
    <name evidence="3" type="primary">tsx</name>
    <name type="ordered locus">STM0413</name>
</gene>
<organism>
    <name type="scientific">Salmonella typhimurium (strain LT2 / SGSC1412 / ATCC 700720)</name>
    <dbReference type="NCBI Taxonomy" id="99287"/>
    <lineage>
        <taxon>Bacteria</taxon>
        <taxon>Pseudomonadati</taxon>
        <taxon>Pseudomonadota</taxon>
        <taxon>Gammaproteobacteria</taxon>
        <taxon>Enterobacterales</taxon>
        <taxon>Enterobacteriaceae</taxon>
        <taxon>Salmonella</taxon>
    </lineage>
</organism>
<proteinExistence type="inferred from homology"/>
<sequence>MKKTLLAVSAALALTSSFTANAAENDQPQYLSDWWHQSVNVVGSYHTRFSPKLNNDVYLEYEAFAKKDWFDFYGYIDIPKTFDWGNGNDKGIWSDGSPLFMEIEPRFSIDKLTGADLSFGPFKEWYFANNYIYDMGDNKASRQSTWYMGLGTDIDTGLPMGLSLNVYAKYQWQNYGASNENEWDGYRFKVKYFVPITDLWGGKLSYIGFTNFDWGSDLGDDPNRTSNSIASSHILALNYDHWHYSVVARYFHNGGQWQNGAKLNWGDGDFSAKSTGWGGYLVVGYNF</sequence>